<gene>
    <name evidence="16" type="primary">Rab11a</name>
    <name evidence="13" type="synonym">Rab11</name>
</gene>
<keyword id="KW-0007">Acetylation</keyword>
<keyword id="KW-0131">Cell cycle</keyword>
<keyword id="KW-1003">Cell membrane</keyword>
<keyword id="KW-0968">Cytoplasmic vesicle</keyword>
<keyword id="KW-0903">Direct protein sequencing</keyword>
<keyword id="KW-0967">Endosome</keyword>
<keyword id="KW-0333">Golgi apparatus</keyword>
<keyword id="KW-0342">GTP-binding</keyword>
<keyword id="KW-0378">Hydrolase</keyword>
<keyword id="KW-0449">Lipoprotein</keyword>
<keyword id="KW-0460">Magnesium</keyword>
<keyword id="KW-0472">Membrane</keyword>
<keyword id="KW-0479">Metal-binding</keyword>
<keyword id="KW-0488">Methylation</keyword>
<keyword id="KW-0547">Nucleotide-binding</keyword>
<keyword id="KW-0636">Prenylation</keyword>
<keyword id="KW-0653">Protein transport</keyword>
<keyword id="KW-1185">Reference proteome</keyword>
<keyword id="KW-0813">Transport</keyword>
<reference key="1">
    <citation type="journal article" date="2000" name="Biochem. Biophys. Res. Commun.">
        <title>Genomic structure of murine rab11 family members.</title>
        <authorList>
            <person name="Bhartur S.G."/>
            <person name="Calhoun B.C."/>
            <person name="Woodrum J."/>
            <person name="Kurkjian J."/>
            <person name="Iyer S."/>
            <person name="Lai F."/>
            <person name="Goldenring J.R."/>
        </authorList>
    </citation>
    <scope>NUCLEOTIDE SEQUENCE [GENOMIC DNA]</scope>
</reference>
<reference key="2">
    <citation type="journal article" date="2005" name="Science">
        <title>The transcriptional landscape of the mammalian genome.</title>
        <authorList>
            <person name="Carninci P."/>
            <person name="Kasukawa T."/>
            <person name="Katayama S."/>
            <person name="Gough J."/>
            <person name="Frith M.C."/>
            <person name="Maeda N."/>
            <person name="Oyama R."/>
            <person name="Ravasi T."/>
            <person name="Lenhard B."/>
            <person name="Wells C."/>
            <person name="Kodzius R."/>
            <person name="Shimokawa K."/>
            <person name="Bajic V.B."/>
            <person name="Brenner S.E."/>
            <person name="Batalov S."/>
            <person name="Forrest A.R."/>
            <person name="Zavolan M."/>
            <person name="Davis M.J."/>
            <person name="Wilming L.G."/>
            <person name="Aidinis V."/>
            <person name="Allen J.E."/>
            <person name="Ambesi-Impiombato A."/>
            <person name="Apweiler R."/>
            <person name="Aturaliya R.N."/>
            <person name="Bailey T.L."/>
            <person name="Bansal M."/>
            <person name="Baxter L."/>
            <person name="Beisel K.W."/>
            <person name="Bersano T."/>
            <person name="Bono H."/>
            <person name="Chalk A.M."/>
            <person name="Chiu K.P."/>
            <person name="Choudhary V."/>
            <person name="Christoffels A."/>
            <person name="Clutterbuck D.R."/>
            <person name="Crowe M.L."/>
            <person name="Dalla E."/>
            <person name="Dalrymple B.P."/>
            <person name="de Bono B."/>
            <person name="Della Gatta G."/>
            <person name="di Bernardo D."/>
            <person name="Down T."/>
            <person name="Engstrom P."/>
            <person name="Fagiolini M."/>
            <person name="Faulkner G."/>
            <person name="Fletcher C.F."/>
            <person name="Fukushima T."/>
            <person name="Furuno M."/>
            <person name="Futaki S."/>
            <person name="Gariboldi M."/>
            <person name="Georgii-Hemming P."/>
            <person name="Gingeras T.R."/>
            <person name="Gojobori T."/>
            <person name="Green R.E."/>
            <person name="Gustincich S."/>
            <person name="Harbers M."/>
            <person name="Hayashi Y."/>
            <person name="Hensch T.K."/>
            <person name="Hirokawa N."/>
            <person name="Hill D."/>
            <person name="Huminiecki L."/>
            <person name="Iacono M."/>
            <person name="Ikeo K."/>
            <person name="Iwama A."/>
            <person name="Ishikawa T."/>
            <person name="Jakt M."/>
            <person name="Kanapin A."/>
            <person name="Katoh M."/>
            <person name="Kawasawa Y."/>
            <person name="Kelso J."/>
            <person name="Kitamura H."/>
            <person name="Kitano H."/>
            <person name="Kollias G."/>
            <person name="Krishnan S.P."/>
            <person name="Kruger A."/>
            <person name="Kummerfeld S.K."/>
            <person name="Kurochkin I.V."/>
            <person name="Lareau L.F."/>
            <person name="Lazarevic D."/>
            <person name="Lipovich L."/>
            <person name="Liu J."/>
            <person name="Liuni S."/>
            <person name="McWilliam S."/>
            <person name="Madan Babu M."/>
            <person name="Madera M."/>
            <person name="Marchionni L."/>
            <person name="Matsuda H."/>
            <person name="Matsuzawa S."/>
            <person name="Miki H."/>
            <person name="Mignone F."/>
            <person name="Miyake S."/>
            <person name="Morris K."/>
            <person name="Mottagui-Tabar S."/>
            <person name="Mulder N."/>
            <person name="Nakano N."/>
            <person name="Nakauchi H."/>
            <person name="Ng P."/>
            <person name="Nilsson R."/>
            <person name="Nishiguchi S."/>
            <person name="Nishikawa S."/>
            <person name="Nori F."/>
            <person name="Ohara O."/>
            <person name="Okazaki Y."/>
            <person name="Orlando V."/>
            <person name="Pang K.C."/>
            <person name="Pavan W.J."/>
            <person name="Pavesi G."/>
            <person name="Pesole G."/>
            <person name="Petrovsky N."/>
            <person name="Piazza S."/>
            <person name="Reed J."/>
            <person name="Reid J.F."/>
            <person name="Ring B.Z."/>
            <person name="Ringwald M."/>
            <person name="Rost B."/>
            <person name="Ruan Y."/>
            <person name="Salzberg S.L."/>
            <person name="Sandelin A."/>
            <person name="Schneider C."/>
            <person name="Schoenbach C."/>
            <person name="Sekiguchi K."/>
            <person name="Semple C.A."/>
            <person name="Seno S."/>
            <person name="Sessa L."/>
            <person name="Sheng Y."/>
            <person name="Shibata Y."/>
            <person name="Shimada H."/>
            <person name="Shimada K."/>
            <person name="Silva D."/>
            <person name="Sinclair B."/>
            <person name="Sperling S."/>
            <person name="Stupka E."/>
            <person name="Sugiura K."/>
            <person name="Sultana R."/>
            <person name="Takenaka Y."/>
            <person name="Taki K."/>
            <person name="Tammoja K."/>
            <person name="Tan S.L."/>
            <person name="Tang S."/>
            <person name="Taylor M.S."/>
            <person name="Tegner J."/>
            <person name="Teichmann S.A."/>
            <person name="Ueda H.R."/>
            <person name="van Nimwegen E."/>
            <person name="Verardo R."/>
            <person name="Wei C.L."/>
            <person name="Yagi K."/>
            <person name="Yamanishi H."/>
            <person name="Zabarovsky E."/>
            <person name="Zhu S."/>
            <person name="Zimmer A."/>
            <person name="Hide W."/>
            <person name="Bult C."/>
            <person name="Grimmond S.M."/>
            <person name="Teasdale R.D."/>
            <person name="Liu E.T."/>
            <person name="Brusic V."/>
            <person name="Quackenbush J."/>
            <person name="Wahlestedt C."/>
            <person name="Mattick J.S."/>
            <person name="Hume D.A."/>
            <person name="Kai C."/>
            <person name="Sasaki D."/>
            <person name="Tomaru Y."/>
            <person name="Fukuda S."/>
            <person name="Kanamori-Katayama M."/>
            <person name="Suzuki M."/>
            <person name="Aoki J."/>
            <person name="Arakawa T."/>
            <person name="Iida J."/>
            <person name="Imamura K."/>
            <person name="Itoh M."/>
            <person name="Kato T."/>
            <person name="Kawaji H."/>
            <person name="Kawagashira N."/>
            <person name="Kawashima T."/>
            <person name="Kojima M."/>
            <person name="Kondo S."/>
            <person name="Konno H."/>
            <person name="Nakano K."/>
            <person name="Ninomiya N."/>
            <person name="Nishio T."/>
            <person name="Okada M."/>
            <person name="Plessy C."/>
            <person name="Shibata K."/>
            <person name="Shiraki T."/>
            <person name="Suzuki S."/>
            <person name="Tagami M."/>
            <person name="Waki K."/>
            <person name="Watahiki A."/>
            <person name="Okamura-Oho Y."/>
            <person name="Suzuki H."/>
            <person name="Kawai J."/>
            <person name="Hayashizaki Y."/>
        </authorList>
    </citation>
    <scope>NUCLEOTIDE SEQUENCE [LARGE SCALE MRNA]</scope>
    <source>
        <strain>C57BL/6J</strain>
        <tissue>Amnion</tissue>
        <tissue>Head</tissue>
    </source>
</reference>
<reference key="3">
    <citation type="journal article" date="2004" name="Genome Res.">
        <title>The status, quality, and expansion of the NIH full-length cDNA project: the Mammalian Gene Collection (MGC).</title>
        <authorList>
            <consortium name="The MGC Project Team"/>
        </authorList>
    </citation>
    <scope>NUCLEOTIDE SEQUENCE [LARGE SCALE MRNA]</scope>
    <source>
        <strain>C57BL/6J</strain>
    </source>
</reference>
<reference key="4">
    <citation type="submission" date="2009-01" db="UniProtKB">
        <authorList>
            <person name="Lubec G."/>
            <person name="Kang S.U."/>
            <person name="Sunyer B."/>
            <person name="Chen W.-Q."/>
        </authorList>
    </citation>
    <scope>PROTEIN SEQUENCE OF 14-24; 42-51 AND 83-95</scope>
    <scope>IDENTIFICATION BY MASS SPECTROMETRY</scope>
    <source>
        <strain>C57BL/6J</strain>
        <strain>OF1</strain>
        <tissue>Brain</tissue>
        <tissue>Hippocampus</tissue>
    </source>
</reference>
<reference key="5">
    <citation type="journal article" date="2004" name="J. Biol. Chem.">
        <title>Sec15 is an effector for the Rab11 GTPase in mammalian cells.</title>
        <authorList>
            <person name="Zhang X.-M."/>
            <person name="Ellis S."/>
            <person name="Sriratana A."/>
            <person name="Mitchell C.A."/>
            <person name="Rowe T."/>
        </authorList>
    </citation>
    <scope>INTERACTION WITH EXOC6</scope>
</reference>
<reference key="6">
    <citation type="journal article" date="2007" name="Genomics">
        <title>Identification of three novel proteins (SGSM1, 2, 3) which modulate small G protein (RAP and RAB)-mediated signaling pathway.</title>
        <authorList>
            <person name="Yang H."/>
            <person name="Sasaki T."/>
            <person name="Minoshima S."/>
            <person name="Shimizu N."/>
        </authorList>
    </citation>
    <scope>INTERACTION WITH SGSM1; SGSM2 AND SGSM3</scope>
</reference>
<reference key="7">
    <citation type="journal article" date="2009" name="Immunity">
        <title>The phagosomal proteome in interferon-gamma-activated macrophages.</title>
        <authorList>
            <person name="Trost M."/>
            <person name="English L."/>
            <person name="Lemieux S."/>
            <person name="Courcelles M."/>
            <person name="Desjardins M."/>
            <person name="Thibault P."/>
        </authorList>
    </citation>
    <scope>IDENTIFICATION BY MASS SPECTROMETRY [LARGE SCALE ANALYSIS]</scope>
</reference>
<reference key="8">
    <citation type="journal article" date="2010" name="Nat. Genet.">
        <title>Mutations in VIPAR cause an arthrogryposis, renal dysfunction and cholestasis syndrome phenotype with defects in epithelial polarization.</title>
        <authorList>
            <person name="Cullinane A.R."/>
            <person name="Straatman-Iwanowska A."/>
            <person name="Zaucker A."/>
            <person name="Wakabayashi Y."/>
            <person name="Bruce C.K."/>
            <person name="Luo G."/>
            <person name="Rahman F."/>
            <person name="Gurakan F."/>
            <person name="Utine E."/>
            <person name="Ozkan T.B."/>
            <person name="Denecke J."/>
            <person name="Vukovic J."/>
            <person name="Di Rocco M."/>
            <person name="Mandel H."/>
            <person name="Cangul H."/>
            <person name="Matthews R.P."/>
            <person name="Thomas S.G."/>
            <person name="Rappoport J.Z."/>
            <person name="Arias I.M."/>
            <person name="Wolburg H."/>
            <person name="Knisely A.S."/>
            <person name="Kelly D.A."/>
            <person name="Muller F."/>
            <person name="Maher E.R."/>
            <person name="Gissen P."/>
        </authorList>
    </citation>
    <scope>INTERACTION WITH VIPAS39</scope>
</reference>
<reference key="9">
    <citation type="journal article" date="2011" name="Traffic">
        <title>The recycling endosome protein Rab17 regulates melanocytic filopodia formation and melanosome trafficking.</title>
        <authorList>
            <person name="Beaumont K.A."/>
            <person name="Hamilton N.A."/>
            <person name="Moores M.T."/>
            <person name="Brown D.L."/>
            <person name="Ohbayashi N."/>
            <person name="Cairncross O."/>
            <person name="Cook A.L."/>
            <person name="Smith A.G."/>
            <person name="Misaki R."/>
            <person name="Fukuda M."/>
            <person name="Taguchi T."/>
            <person name="Sturm R.A."/>
            <person name="Stow J.L."/>
        </authorList>
    </citation>
    <scope>FUNCTION IN MELANOSOME TRANSPORT</scope>
</reference>
<reference key="10">
    <citation type="journal article" date="2015" name="Dev. Cell">
        <title>REI-1 is a guanine nucleotide exchange factor regulating RAB-11 localization and function in C. elegans embryos.</title>
        <authorList>
            <person name="Sakaguchi A."/>
            <person name="Sato M."/>
            <person name="Sato K."/>
            <person name="Gengyo-Ando K."/>
            <person name="Yorimitsu T."/>
            <person name="Nakai J."/>
            <person name="Hara T."/>
            <person name="Sato K."/>
            <person name="Sato K."/>
        </authorList>
    </citation>
    <scope>INTERACTION WITH SH3BP5</scope>
</reference>
<reference key="11">
    <citation type="journal article" date="2017" name="PLoS ONE">
        <title>TBC1D12 is a novel Rab11-binding protein that modulates neurite outgrowth of PC12 cells.</title>
        <authorList>
            <person name="Oguchi M.E."/>
            <person name="Noguchi K."/>
            <person name="Fukuda M."/>
        </authorList>
    </citation>
    <scope>INTERACTION WITH TBC1D12</scope>
</reference>
<reference key="12">
    <citation type="journal article" date="2018" name="J. Cell Biol.">
        <title>The Rab11-binding protein RELCH/KIAA1468 controls intracellular cholesterol distribution.</title>
        <authorList>
            <person name="Sobajima T."/>
            <person name="Yoshimura S.I."/>
            <person name="Maeda T."/>
            <person name="Miyata H."/>
            <person name="Miyoshi E."/>
            <person name="Harada A."/>
        </authorList>
    </citation>
    <scope>INTERACTION WITH RELCH</scope>
    <scope>SUBCELLULAR LOCATION</scope>
    <scope>IDENTIFICATION IN A COMPLEX WITH RECHL AND OSBP1</scope>
</reference>
<feature type="initiator methionine" description="Removed" evidence="2">
    <location>
        <position position="1"/>
    </location>
</feature>
<feature type="chain" id="PRO_0000121152" description="Ras-related protein Rab-11A">
    <location>
        <begin position="2"/>
        <end position="213"/>
    </location>
</feature>
<feature type="propeptide" id="PRO_0000370808" description="Removed in mature form" evidence="5">
    <location>
        <begin position="214"/>
        <end position="216"/>
    </location>
</feature>
<feature type="region of interest" description="Disordered" evidence="6">
    <location>
        <begin position="183"/>
        <end position="211"/>
    </location>
</feature>
<feature type="short sequence motif" description="Switch 1" evidence="2">
    <location>
        <begin position="36"/>
        <end position="47"/>
    </location>
</feature>
<feature type="short sequence motif" description="Switch 2" evidence="2">
    <location>
        <begin position="67"/>
        <end position="86"/>
    </location>
</feature>
<feature type="binding site" evidence="2">
    <location>
        <position position="20"/>
    </location>
    <ligand>
        <name>GTP</name>
        <dbReference type="ChEBI" id="CHEBI:37565"/>
    </ligand>
</feature>
<feature type="binding site" evidence="2">
    <location>
        <position position="21"/>
    </location>
    <ligand>
        <name>GTP</name>
        <dbReference type="ChEBI" id="CHEBI:37565"/>
    </ligand>
</feature>
<feature type="binding site" evidence="2">
    <location>
        <position position="22"/>
    </location>
    <ligand>
        <name>GTP</name>
        <dbReference type="ChEBI" id="CHEBI:37565"/>
    </ligand>
</feature>
<feature type="binding site" evidence="2">
    <location>
        <position position="23"/>
    </location>
    <ligand>
        <name>GTP</name>
        <dbReference type="ChEBI" id="CHEBI:37565"/>
    </ligand>
</feature>
<feature type="binding site" evidence="2">
    <location>
        <position position="24"/>
    </location>
    <ligand>
        <name>GTP</name>
        <dbReference type="ChEBI" id="CHEBI:37565"/>
    </ligand>
</feature>
<feature type="binding site" evidence="2">
    <location>
        <position position="25"/>
    </location>
    <ligand>
        <name>GTP</name>
        <dbReference type="ChEBI" id="CHEBI:37565"/>
    </ligand>
</feature>
<feature type="binding site" evidence="2">
    <location>
        <position position="25"/>
    </location>
    <ligand>
        <name>Mg(2+)</name>
        <dbReference type="ChEBI" id="CHEBI:18420"/>
    </ligand>
</feature>
<feature type="binding site" evidence="2">
    <location>
        <position position="26"/>
    </location>
    <ligand>
        <name>GTP</name>
        <dbReference type="ChEBI" id="CHEBI:37565"/>
    </ligand>
</feature>
<feature type="binding site" evidence="2">
    <location>
        <position position="37"/>
    </location>
    <ligand>
        <name>GTP</name>
        <dbReference type="ChEBI" id="CHEBI:37565"/>
    </ligand>
</feature>
<feature type="binding site" evidence="2">
    <location>
        <position position="38"/>
    </location>
    <ligand>
        <name>GTP</name>
        <dbReference type="ChEBI" id="CHEBI:37565"/>
    </ligand>
</feature>
<feature type="binding site" evidence="2">
    <location>
        <position position="40"/>
    </location>
    <ligand>
        <name>GTP</name>
        <dbReference type="ChEBI" id="CHEBI:37565"/>
    </ligand>
</feature>
<feature type="binding site" evidence="2">
    <location>
        <position position="42"/>
    </location>
    <ligand>
        <name>GTP</name>
        <dbReference type="ChEBI" id="CHEBI:37565"/>
    </ligand>
</feature>
<feature type="binding site" evidence="2">
    <location>
        <position position="43"/>
    </location>
    <ligand>
        <name>GTP</name>
        <dbReference type="ChEBI" id="CHEBI:37565"/>
    </ligand>
</feature>
<feature type="binding site" evidence="2">
    <location>
        <position position="43"/>
    </location>
    <ligand>
        <name>Mg(2+)</name>
        <dbReference type="ChEBI" id="CHEBI:18420"/>
    </ligand>
</feature>
<feature type="binding site" evidence="2">
    <location>
        <position position="66"/>
    </location>
    <ligand>
        <name>Mg(2+)</name>
        <dbReference type="ChEBI" id="CHEBI:18420"/>
    </ligand>
</feature>
<feature type="binding site" evidence="2">
    <location>
        <position position="69"/>
    </location>
    <ligand>
        <name>GTP</name>
        <dbReference type="ChEBI" id="CHEBI:37565"/>
    </ligand>
</feature>
<feature type="binding site" evidence="2">
    <location>
        <position position="124"/>
    </location>
    <ligand>
        <name>GTP</name>
        <dbReference type="ChEBI" id="CHEBI:37565"/>
    </ligand>
</feature>
<feature type="binding site" evidence="2">
    <location>
        <position position="125"/>
    </location>
    <ligand>
        <name>GTP</name>
        <dbReference type="ChEBI" id="CHEBI:37565"/>
    </ligand>
</feature>
<feature type="binding site" evidence="2">
    <location>
        <position position="127"/>
    </location>
    <ligand>
        <name>GTP</name>
        <dbReference type="ChEBI" id="CHEBI:37565"/>
    </ligand>
</feature>
<feature type="binding site" evidence="2">
    <location>
        <position position="155"/>
    </location>
    <ligand>
        <name>GTP</name>
        <dbReference type="ChEBI" id="CHEBI:37565"/>
    </ligand>
</feature>
<feature type="binding site" evidence="2">
    <location>
        <position position="156"/>
    </location>
    <ligand>
        <name>GTP</name>
        <dbReference type="ChEBI" id="CHEBI:37565"/>
    </ligand>
</feature>
<feature type="modified residue" description="N-acetylglycine" evidence="2">
    <location>
        <position position="2"/>
    </location>
</feature>
<feature type="modified residue" description="Cysteine methyl ester" evidence="5">
    <location>
        <position position="213"/>
    </location>
</feature>
<feature type="lipid moiety-binding region" description="S-geranylgeranyl cysteine" evidence="2">
    <location>
        <position position="212"/>
    </location>
</feature>
<feature type="lipid moiety-binding region" description="S-geranylgeranyl cysteine" evidence="2">
    <location>
        <position position="213"/>
    </location>
</feature>
<feature type="sequence conflict" description="In Ref. 1; AAF36458." evidence="15" ref="1">
    <original>Q</original>
    <variation>H</variation>
    <location>
        <position position="180"/>
    </location>
</feature>
<name>RB11A_MOUSE</name>
<evidence type="ECO:0000250" key="1">
    <source>
        <dbReference type="UniProtKB" id="P62490"/>
    </source>
</evidence>
<evidence type="ECO:0000250" key="2">
    <source>
        <dbReference type="UniProtKB" id="P62491"/>
    </source>
</evidence>
<evidence type="ECO:0000250" key="3">
    <source>
        <dbReference type="UniProtKB" id="P62493"/>
    </source>
</evidence>
<evidence type="ECO:0000250" key="4">
    <source>
        <dbReference type="UniProtKB" id="P62494"/>
    </source>
</evidence>
<evidence type="ECO:0000255" key="5"/>
<evidence type="ECO:0000256" key="6">
    <source>
        <dbReference type="SAM" id="MobiDB-lite"/>
    </source>
</evidence>
<evidence type="ECO:0000269" key="7">
    <source>
    </source>
</evidence>
<evidence type="ECO:0000269" key="8">
    <source>
    </source>
</evidence>
<evidence type="ECO:0000269" key="9">
    <source>
    </source>
</evidence>
<evidence type="ECO:0000269" key="10">
    <source>
    </source>
</evidence>
<evidence type="ECO:0000269" key="11">
    <source>
    </source>
</evidence>
<evidence type="ECO:0000269" key="12">
    <source>
    </source>
</evidence>
<evidence type="ECO:0000303" key="13">
    <source>
    </source>
</evidence>
<evidence type="ECO:0000303" key="14">
    <source>
    </source>
</evidence>
<evidence type="ECO:0000305" key="15"/>
<evidence type="ECO:0000312" key="16">
    <source>
        <dbReference type="MGI" id="MGI:1858202"/>
    </source>
</evidence>
<proteinExistence type="evidence at protein level"/>
<accession>P62492</accession>
<accession>P24410</accession>
<accession>Q3V1Z6</accession>
<accession>Q9JLX1</accession>
<sequence>MGTRDDEYDYLFKVVLIGDSGVGKSNLLSRFTRNEFNLESKSTIGVEFATRSIQVDGKTIKAQIWDTAGQERYRAITSAYYRGAVGALLVYDIAKHLTYENVERWLKELRDHADSNIVIMLVGNKSDLRHLRAVPTDEARAFAEKNGLSFIETSALDSTNVEAAFQTILTEIYRIVSQKQMSDRRENDMSPSNNVVPIHVPPTTENKPKVQCCQNI</sequence>
<dbReference type="EC" id="3.6.5.2" evidence="3"/>
<dbReference type="EMBL" id="AF127669">
    <property type="protein sequence ID" value="AAF36458.1"/>
    <property type="molecule type" value="Genomic_DNA"/>
</dbReference>
<dbReference type="EMBL" id="AK014268">
    <property type="protein sequence ID" value="BAB29233.1"/>
    <property type="molecule type" value="mRNA"/>
</dbReference>
<dbReference type="EMBL" id="AK132072">
    <property type="protein sequence ID" value="BAE20971.1"/>
    <property type="molecule type" value="mRNA"/>
</dbReference>
<dbReference type="EMBL" id="AK132159">
    <property type="protein sequence ID" value="BAE21003.1"/>
    <property type="molecule type" value="mRNA"/>
</dbReference>
<dbReference type="EMBL" id="AK147122">
    <property type="protein sequence ID" value="BAE27693.1"/>
    <property type="molecule type" value="mRNA"/>
</dbReference>
<dbReference type="EMBL" id="BC010722">
    <property type="protein sequence ID" value="AAH10722.1"/>
    <property type="molecule type" value="mRNA"/>
</dbReference>
<dbReference type="CCDS" id="CCDS23282.1"/>
<dbReference type="RefSeq" id="NP_059078.2">
    <property type="nucleotide sequence ID" value="NM_017382.5"/>
</dbReference>
<dbReference type="SMR" id="P62492"/>
<dbReference type="BioGRID" id="207498">
    <property type="interactions" value="17"/>
</dbReference>
<dbReference type="FunCoup" id="P62492">
    <property type="interactions" value="3617"/>
</dbReference>
<dbReference type="IntAct" id="P62492">
    <property type="interactions" value="25"/>
</dbReference>
<dbReference type="MINT" id="P62492"/>
<dbReference type="STRING" id="10090.ENSMUSP00000129163"/>
<dbReference type="GlyGen" id="P62492">
    <property type="glycosylation" value="1 site, 1 O-linked glycan (1 site)"/>
</dbReference>
<dbReference type="iPTMnet" id="P62492"/>
<dbReference type="PhosphoSitePlus" id="P62492"/>
<dbReference type="SwissPalm" id="P62492"/>
<dbReference type="jPOST" id="P62492"/>
<dbReference type="PaxDb" id="10090-ENSMUSP00000129163"/>
<dbReference type="PeptideAtlas" id="P62492"/>
<dbReference type="ProteomicsDB" id="255112"/>
<dbReference type="Pumba" id="P62492"/>
<dbReference type="TopDownProteomics" id="P62492"/>
<dbReference type="Antibodypedia" id="4588">
    <property type="antibodies" value="504 antibodies from 38 providers"/>
</dbReference>
<dbReference type="DNASU" id="53869"/>
<dbReference type="Ensembl" id="ENSMUST00000172298.8">
    <property type="protein sequence ID" value="ENSMUSP00000129163.2"/>
    <property type="gene ID" value="ENSMUSG00000004771.13"/>
</dbReference>
<dbReference type="GeneID" id="53869"/>
<dbReference type="KEGG" id="mmu:53869"/>
<dbReference type="UCSC" id="uc009qce.1">
    <property type="organism name" value="mouse"/>
</dbReference>
<dbReference type="AGR" id="MGI:1858202"/>
<dbReference type="CTD" id="8766"/>
<dbReference type="MGI" id="MGI:1858202">
    <property type="gene designation" value="Rab11a"/>
</dbReference>
<dbReference type="VEuPathDB" id="HostDB:ENSMUSG00000004771"/>
<dbReference type="eggNOG" id="KOG0087">
    <property type="taxonomic scope" value="Eukaryota"/>
</dbReference>
<dbReference type="GeneTree" id="ENSGT00940000154914"/>
<dbReference type="HOGENOM" id="CLU_041217_23_0_1"/>
<dbReference type="InParanoid" id="P62492"/>
<dbReference type="OMA" id="ITAIYQM"/>
<dbReference type="OrthoDB" id="9989112at2759"/>
<dbReference type="PhylomeDB" id="P62492"/>
<dbReference type="TreeFam" id="TF300099"/>
<dbReference type="Reactome" id="R-MMU-432040">
    <property type="pathway name" value="Vasopressin regulates renal water homeostasis via Aquaporins"/>
</dbReference>
<dbReference type="Reactome" id="R-MMU-5620912">
    <property type="pathway name" value="Anchoring of the basal body to the plasma membrane"/>
</dbReference>
<dbReference type="Reactome" id="R-MMU-5620916">
    <property type="pathway name" value="VxPx cargo-targeting to cilium"/>
</dbReference>
<dbReference type="Reactome" id="R-MMU-8854214">
    <property type="pathway name" value="TBC/RABGAPs"/>
</dbReference>
<dbReference type="Reactome" id="R-MMU-8873719">
    <property type="pathway name" value="RAB geranylgeranylation"/>
</dbReference>
<dbReference type="BioGRID-ORCS" id="53869">
    <property type="hits" value="3 hits in 79 CRISPR screens"/>
</dbReference>
<dbReference type="ChiTaRS" id="Rab11a">
    <property type="organism name" value="mouse"/>
</dbReference>
<dbReference type="PRO" id="PR:P62492"/>
<dbReference type="Proteomes" id="UP000000589">
    <property type="component" value="Chromosome 9"/>
</dbReference>
<dbReference type="RNAct" id="P62492">
    <property type="molecule type" value="protein"/>
</dbReference>
<dbReference type="Bgee" id="ENSMUSG00000004771">
    <property type="expression patterns" value="Expressed in lip and 265 other cell types or tissues"/>
</dbReference>
<dbReference type="ExpressionAtlas" id="P62492">
    <property type="expression patterns" value="baseline and differential"/>
</dbReference>
<dbReference type="GO" id="GO:0005814">
    <property type="term" value="C:centriole"/>
    <property type="evidence" value="ECO:0000314"/>
    <property type="project" value="MGI"/>
</dbReference>
<dbReference type="GO" id="GO:0005813">
    <property type="term" value="C:centrosome"/>
    <property type="evidence" value="ECO:0000250"/>
    <property type="project" value="UniProtKB"/>
</dbReference>
<dbReference type="GO" id="GO:0032154">
    <property type="term" value="C:cleavage furrow"/>
    <property type="evidence" value="ECO:0000250"/>
    <property type="project" value="UniProtKB"/>
</dbReference>
<dbReference type="GO" id="GO:0005737">
    <property type="term" value="C:cytoplasm"/>
    <property type="evidence" value="ECO:0000314"/>
    <property type="project" value="MGI"/>
</dbReference>
<dbReference type="GO" id="GO:0030666">
    <property type="term" value="C:endocytic vesicle membrane"/>
    <property type="evidence" value="ECO:0000250"/>
    <property type="project" value="UniProtKB"/>
</dbReference>
<dbReference type="GO" id="GO:0070062">
    <property type="term" value="C:extracellular exosome"/>
    <property type="evidence" value="ECO:0007669"/>
    <property type="project" value="Ensembl"/>
</dbReference>
<dbReference type="GO" id="GO:0098978">
    <property type="term" value="C:glutamatergic synapse"/>
    <property type="evidence" value="ECO:0007669"/>
    <property type="project" value="Ensembl"/>
</dbReference>
<dbReference type="GO" id="GO:0000139">
    <property type="term" value="C:Golgi membrane"/>
    <property type="evidence" value="ECO:0000250"/>
    <property type="project" value="UniProtKB"/>
</dbReference>
<dbReference type="GO" id="GO:0005828">
    <property type="term" value="C:kinetochore microtubule"/>
    <property type="evidence" value="ECO:0007669"/>
    <property type="project" value="Ensembl"/>
</dbReference>
<dbReference type="GO" id="GO:0016020">
    <property type="term" value="C:membrane"/>
    <property type="evidence" value="ECO:0000314"/>
    <property type="project" value="MGI"/>
</dbReference>
<dbReference type="GO" id="GO:0005739">
    <property type="term" value="C:mitochondrion"/>
    <property type="evidence" value="ECO:0007005"/>
    <property type="project" value="MGI"/>
</dbReference>
<dbReference type="GO" id="GO:0005771">
    <property type="term" value="C:multivesicular body"/>
    <property type="evidence" value="ECO:0007669"/>
    <property type="project" value="Ensembl"/>
</dbReference>
<dbReference type="GO" id="GO:0045335">
    <property type="term" value="C:phagocytic vesicle"/>
    <property type="evidence" value="ECO:0000250"/>
    <property type="project" value="UniProtKB"/>
</dbReference>
<dbReference type="GO" id="GO:0098837">
    <property type="term" value="C:postsynaptic recycling endosome"/>
    <property type="evidence" value="ECO:0007669"/>
    <property type="project" value="Ensembl"/>
</dbReference>
<dbReference type="GO" id="GO:0098830">
    <property type="term" value="C:presynaptic endosome"/>
    <property type="evidence" value="ECO:0007669"/>
    <property type="project" value="Ensembl"/>
</dbReference>
<dbReference type="GO" id="GO:0032991">
    <property type="term" value="C:protein-containing complex"/>
    <property type="evidence" value="ECO:0007669"/>
    <property type="project" value="Ensembl"/>
</dbReference>
<dbReference type="GO" id="GO:0055037">
    <property type="term" value="C:recycling endosome"/>
    <property type="evidence" value="ECO:0000314"/>
    <property type="project" value="UniProtKB"/>
</dbReference>
<dbReference type="GO" id="GO:0055038">
    <property type="term" value="C:recycling endosome membrane"/>
    <property type="evidence" value="ECO:0007669"/>
    <property type="project" value="UniProtKB-SubCell"/>
</dbReference>
<dbReference type="GO" id="GO:0098685">
    <property type="term" value="C:Schaffer collateral - CA1 synapse"/>
    <property type="evidence" value="ECO:0007669"/>
    <property type="project" value="Ensembl"/>
</dbReference>
<dbReference type="GO" id="GO:0000922">
    <property type="term" value="C:spindle pole"/>
    <property type="evidence" value="ECO:0007669"/>
    <property type="project" value="Ensembl"/>
</dbReference>
<dbReference type="GO" id="GO:0030672">
    <property type="term" value="C:synaptic vesicle membrane"/>
    <property type="evidence" value="ECO:0007669"/>
    <property type="project" value="Ensembl"/>
</dbReference>
<dbReference type="GO" id="GO:0005802">
    <property type="term" value="C:trans-Golgi network"/>
    <property type="evidence" value="ECO:0000266"/>
    <property type="project" value="MGI"/>
</dbReference>
<dbReference type="GO" id="GO:0032588">
    <property type="term" value="C:trans-Golgi network membrane"/>
    <property type="evidence" value="ECO:0000250"/>
    <property type="project" value="UniProtKB"/>
</dbReference>
<dbReference type="GO" id="GO:0051959">
    <property type="term" value="F:dynein light intermediate chain binding"/>
    <property type="evidence" value="ECO:0000250"/>
    <property type="project" value="UniProtKB"/>
</dbReference>
<dbReference type="GO" id="GO:0003925">
    <property type="term" value="F:G protein activity"/>
    <property type="evidence" value="ECO:0007669"/>
    <property type="project" value="UniProtKB-EC"/>
</dbReference>
<dbReference type="GO" id="GO:0005525">
    <property type="term" value="F:GTP binding"/>
    <property type="evidence" value="ECO:0007669"/>
    <property type="project" value="UniProtKB-KW"/>
</dbReference>
<dbReference type="GO" id="GO:0003924">
    <property type="term" value="F:GTPase activity"/>
    <property type="evidence" value="ECO:0000250"/>
    <property type="project" value="UniProtKB"/>
</dbReference>
<dbReference type="GO" id="GO:0008017">
    <property type="term" value="F:microtubule binding"/>
    <property type="evidence" value="ECO:0007669"/>
    <property type="project" value="Ensembl"/>
</dbReference>
<dbReference type="GO" id="GO:0031489">
    <property type="term" value="F:myosin V binding"/>
    <property type="evidence" value="ECO:0007669"/>
    <property type="project" value="Ensembl"/>
</dbReference>
<dbReference type="GO" id="GO:0150093">
    <property type="term" value="P:amyloid-beta clearance by transcytosis"/>
    <property type="evidence" value="ECO:0007669"/>
    <property type="project" value="Ensembl"/>
</dbReference>
<dbReference type="GO" id="GO:0030953">
    <property type="term" value="P:astral microtubule organization"/>
    <property type="evidence" value="ECO:0007669"/>
    <property type="project" value="Ensembl"/>
</dbReference>
<dbReference type="GO" id="GO:0061502">
    <property type="term" value="P:early endosome to recycling endosome transport"/>
    <property type="evidence" value="ECO:0007669"/>
    <property type="project" value="Ensembl"/>
</dbReference>
<dbReference type="GO" id="GO:0072594">
    <property type="term" value="P:establishment of protein localization to organelle"/>
    <property type="evidence" value="ECO:0007669"/>
    <property type="project" value="Ensembl"/>
</dbReference>
<dbReference type="GO" id="GO:1990182">
    <property type="term" value="P:exosomal secretion"/>
    <property type="evidence" value="ECO:0007669"/>
    <property type="project" value="Ensembl"/>
</dbReference>
<dbReference type="GO" id="GO:0032402">
    <property type="term" value="P:melanosome transport"/>
    <property type="evidence" value="ECO:0000315"/>
    <property type="project" value="UniProtKB"/>
</dbReference>
<dbReference type="GO" id="GO:0007080">
    <property type="term" value="P:mitotic metaphase chromosome alignment"/>
    <property type="evidence" value="ECO:0007669"/>
    <property type="project" value="Ensembl"/>
</dbReference>
<dbReference type="GO" id="GO:0090307">
    <property type="term" value="P:mitotic spindle assembly"/>
    <property type="evidence" value="ECO:0007669"/>
    <property type="project" value="Ensembl"/>
</dbReference>
<dbReference type="GO" id="GO:0036258">
    <property type="term" value="P:multivesicular body assembly"/>
    <property type="evidence" value="ECO:0007669"/>
    <property type="project" value="Ensembl"/>
</dbReference>
<dbReference type="GO" id="GO:0031175">
    <property type="term" value="P:neuron projection development"/>
    <property type="evidence" value="ECO:0000250"/>
    <property type="project" value="UniProtKB"/>
</dbReference>
<dbReference type="GO" id="GO:0098887">
    <property type="term" value="P:neurotransmitter receptor transport, endosome to postsynaptic membrane"/>
    <property type="evidence" value="ECO:0007669"/>
    <property type="project" value="Ensembl"/>
</dbReference>
<dbReference type="GO" id="GO:0010634">
    <property type="term" value="P:positive regulation of epithelial cell migration"/>
    <property type="evidence" value="ECO:0007669"/>
    <property type="project" value="Ensembl"/>
</dbReference>
<dbReference type="GO" id="GO:0010971">
    <property type="term" value="P:positive regulation of G2/M transition of mitotic cell cycle"/>
    <property type="evidence" value="ECO:0007669"/>
    <property type="project" value="Ensembl"/>
</dbReference>
<dbReference type="GO" id="GO:1903438">
    <property type="term" value="P:positive regulation of mitotic cytokinetic process"/>
    <property type="evidence" value="ECO:0007669"/>
    <property type="project" value="Ensembl"/>
</dbReference>
<dbReference type="GO" id="GO:1903078">
    <property type="term" value="P:positive regulation of protein localization to plasma membrane"/>
    <property type="evidence" value="ECO:0007669"/>
    <property type="project" value="Ensembl"/>
</dbReference>
<dbReference type="GO" id="GO:0034394">
    <property type="term" value="P:protein localization to cell surface"/>
    <property type="evidence" value="ECO:0000315"/>
    <property type="project" value="MGI"/>
</dbReference>
<dbReference type="GO" id="GO:0061512">
    <property type="term" value="P:protein localization to cilium"/>
    <property type="evidence" value="ECO:0000250"/>
    <property type="project" value="UniProtKB"/>
</dbReference>
<dbReference type="GO" id="GO:0072659">
    <property type="term" value="P:protein localization to plasma membrane"/>
    <property type="evidence" value="ECO:0000250"/>
    <property type="project" value="UniProtKB"/>
</dbReference>
<dbReference type="GO" id="GO:0071806">
    <property type="term" value="P:protein transmembrane transport"/>
    <property type="evidence" value="ECO:0000315"/>
    <property type="project" value="MGI"/>
</dbReference>
<dbReference type="GO" id="GO:1902017">
    <property type="term" value="P:regulation of cilium assembly"/>
    <property type="evidence" value="ECO:0000250"/>
    <property type="project" value="UniProtKB"/>
</dbReference>
<dbReference type="GO" id="GO:1902954">
    <property type="term" value="P:regulation of early endosome to recycling endosome transport"/>
    <property type="evidence" value="ECO:0000250"/>
    <property type="project" value="UniProtKB"/>
</dbReference>
<dbReference type="GO" id="GO:2001135">
    <property type="term" value="P:regulation of endocytic recycling"/>
    <property type="evidence" value="ECO:0000250"/>
    <property type="project" value="UniProtKB"/>
</dbReference>
<dbReference type="GO" id="GO:0048169">
    <property type="term" value="P:regulation of long-term neuronal synaptic plasticity"/>
    <property type="evidence" value="ECO:0007669"/>
    <property type="project" value="Ensembl"/>
</dbReference>
<dbReference type="GO" id="GO:1904779">
    <property type="term" value="P:regulation of protein localization to centrosome"/>
    <property type="evidence" value="ECO:0000250"/>
    <property type="project" value="UniProtKB"/>
</dbReference>
<dbReference type="GO" id="GO:0051223">
    <property type="term" value="P:regulation of protein transport"/>
    <property type="evidence" value="ECO:0007669"/>
    <property type="project" value="Ensembl"/>
</dbReference>
<dbReference type="GO" id="GO:0099532">
    <property type="term" value="P:synaptic vesicle endosomal processing"/>
    <property type="evidence" value="ECO:0007669"/>
    <property type="project" value="Ensembl"/>
</dbReference>
<dbReference type="GO" id="GO:0099003">
    <property type="term" value="P:vesicle-mediated transport in synapse"/>
    <property type="evidence" value="ECO:0007669"/>
    <property type="project" value="Ensembl"/>
</dbReference>
<dbReference type="CDD" id="cd01868">
    <property type="entry name" value="Rab11_like"/>
    <property type="match status" value="1"/>
</dbReference>
<dbReference type="FunFam" id="3.40.50.300:FF:000085">
    <property type="entry name" value="Putative ras-related protein rab-11a"/>
    <property type="match status" value="1"/>
</dbReference>
<dbReference type="Gene3D" id="3.40.50.300">
    <property type="entry name" value="P-loop containing nucleotide triphosphate hydrolases"/>
    <property type="match status" value="1"/>
</dbReference>
<dbReference type="InterPro" id="IPR027417">
    <property type="entry name" value="P-loop_NTPase"/>
</dbReference>
<dbReference type="InterPro" id="IPR050209">
    <property type="entry name" value="Rab_GTPases_membrane_traffic"/>
</dbReference>
<dbReference type="InterPro" id="IPR005225">
    <property type="entry name" value="Small_GTP-bd"/>
</dbReference>
<dbReference type="InterPro" id="IPR001806">
    <property type="entry name" value="Small_GTPase"/>
</dbReference>
<dbReference type="NCBIfam" id="TIGR00231">
    <property type="entry name" value="small_GTP"/>
    <property type="match status" value="1"/>
</dbReference>
<dbReference type="PANTHER" id="PTHR47979">
    <property type="entry name" value="DRAB11-RELATED"/>
    <property type="match status" value="1"/>
</dbReference>
<dbReference type="Pfam" id="PF00071">
    <property type="entry name" value="Ras"/>
    <property type="match status" value="1"/>
</dbReference>
<dbReference type="PRINTS" id="PR00449">
    <property type="entry name" value="RASTRNSFRMNG"/>
</dbReference>
<dbReference type="SMART" id="SM00175">
    <property type="entry name" value="RAB"/>
    <property type="match status" value="1"/>
</dbReference>
<dbReference type="SMART" id="SM00176">
    <property type="entry name" value="RAN"/>
    <property type="match status" value="1"/>
</dbReference>
<dbReference type="SMART" id="SM00173">
    <property type="entry name" value="RAS"/>
    <property type="match status" value="1"/>
</dbReference>
<dbReference type="SMART" id="SM00174">
    <property type="entry name" value="RHO"/>
    <property type="match status" value="1"/>
</dbReference>
<dbReference type="SUPFAM" id="SSF52540">
    <property type="entry name" value="P-loop containing nucleoside triphosphate hydrolases"/>
    <property type="match status" value="1"/>
</dbReference>
<dbReference type="PROSITE" id="PS51419">
    <property type="entry name" value="RAB"/>
    <property type="match status" value="1"/>
</dbReference>
<organism>
    <name type="scientific">Mus musculus</name>
    <name type="common">Mouse</name>
    <dbReference type="NCBI Taxonomy" id="10090"/>
    <lineage>
        <taxon>Eukaryota</taxon>
        <taxon>Metazoa</taxon>
        <taxon>Chordata</taxon>
        <taxon>Craniata</taxon>
        <taxon>Vertebrata</taxon>
        <taxon>Euteleostomi</taxon>
        <taxon>Mammalia</taxon>
        <taxon>Eutheria</taxon>
        <taxon>Euarchontoglires</taxon>
        <taxon>Glires</taxon>
        <taxon>Rodentia</taxon>
        <taxon>Myomorpha</taxon>
        <taxon>Muroidea</taxon>
        <taxon>Muridae</taxon>
        <taxon>Murinae</taxon>
        <taxon>Mus</taxon>
        <taxon>Mus</taxon>
    </lineage>
</organism>
<comment type="function">
    <text evidence="1 2 9">The small GTPases Rab are key regulators of intracellular membrane trafficking, from the formation of transport vesicles to their fusion with membranes. Rabs cycle between an inactive GDP-bound form and an active GTP-bound form that is able to recruit to membranes different set of downstream effectors directly responsible for vesicle formation, movement, tethering and fusion. The small Rab GTPase RAB11A regulates endocytic recycling. Forms a functional Rab11/RAB11FIP3/dynein complex that regulates the movement of peripheral sorting endosomes (SE) along microtubule tracks toward the microtubule organizing center/centrosome, generating the endosomal recycling compartment (ERC). Acts as a major regulator of membrane delivery during cytokinesis. Together with MYO5B and RAB8A participates in epithelial cell polarization. Together with Rabin8/RAB3IP, RAB8A, the exocyst complex, PARD3, PRKCI, ANXA2, CDC42 and DNMBP promotes transcytosis of PODXL to the apical membrane initiation sites (AMIS), apical surface formation and lumenogenesis. Together with MYO5B participates in CFTR trafficking to the plasma membrane and TF (Transferrin) recycling in nonpolarized cells. Required in a complex with MYO5B and RAB11FIP2 for the transport of NPC1L1 to the plasma membrane. Participates in the sorting and basolateral transport of CDH1 from the Golgi apparatus to the plasma membrane (By similarity). Regulates the recycling of FCGRT (receptor of Fc region of monomeric IgG) to basolateral membranes (By similarity). May also play a role in melanosome transport and release from melanocytes (PubMed:21291502). Promotes Rabin8/RAB3IP preciliary vesicular trafficking to mother centriole by forming a ciliary targeting complex containing Rab11, ASAP1, Rabin8/RAB3IP, RAB11FIP3 and ARF4, thereby regulating ciliogenesis initiation. On the contrary, upon LPAR1 receptor signaling pathway activation, interaction with phosphorylated WDR44 prevents Rab11-RAB3IP-RAB11FIP3 complex formation and cilia growth. Participates in the export of a subset of neosynthesized proteins through a Rab8-Rab10-Rab11-endososomal dependent export route via interaction with WDR44 (By similarity).</text>
</comment>
<comment type="catalytic activity">
    <reaction evidence="3">
        <text>GTP + H2O = GDP + phosphate + H(+)</text>
        <dbReference type="Rhea" id="RHEA:19669"/>
        <dbReference type="ChEBI" id="CHEBI:15377"/>
        <dbReference type="ChEBI" id="CHEBI:15378"/>
        <dbReference type="ChEBI" id="CHEBI:37565"/>
        <dbReference type="ChEBI" id="CHEBI:43474"/>
        <dbReference type="ChEBI" id="CHEBI:58189"/>
        <dbReference type="EC" id="3.6.5.2"/>
    </reaction>
    <physiologicalReaction direction="left-to-right" evidence="3">
        <dbReference type="Rhea" id="RHEA:19670"/>
    </physiologicalReaction>
</comment>
<comment type="cofactor">
    <cofactor evidence="2">
        <name>Mg(2+)</name>
        <dbReference type="ChEBI" id="CHEBI:18420"/>
    </cofactor>
</comment>
<comment type="activity regulation">
    <text evidence="15">Regulated by guanine nucleotide exchange factors (GEFs) which promote the exchange of bound GDP for free GTP. Regulated by GTPase activating proteins (GAPs) which increase the GTP hydrolysis activity. Inhibited by GDP dissociation inhibitors (GDIs) which prevent Rab-GDP dissociation.</text>
</comment>
<comment type="subunit">
    <text evidence="2 4 7 8 10 11 12">Interacts (GTP-bound form) with RAB11FIPs (via their C-termini) including RAB11FIP1, RAB11FIP2, RAB11FIP3, RAB11FIP4 and RAB11FIP5 effectors (By similarity). Interacts with EVI5; EVI5 and RAB11FIP3 may be mutually exclusive and compete for binding RAB11A (By similarity). Forms a complex with RAB11FIP3 and dynein intermediate chain DYNC1LI1; the interaction between RAB11A1 and RAB11FIP3 is direct; the complex regulates endocytic trafficking (By similarity). Interacts with RAB11FIP5 (By similarity). Interacts with STXBP6 (By similarity). Interacts (GDP-bound form) with ZFYVE27 (By similarity). Interacts with SGSM1, SGSM2, SGSM3 and VIPAS39 (PubMed:17509819, PubMed:20190753). Interacts with EXOC6 in a GTP-dependent manner (PubMed:15292201). Interacts with BIRC6/bruce (By similarity). May interact with TBC1D14 (By similarity). Interacts with UNC119; in a cell cycle-dependent manner (By similarity). GDP-bound and nucleotide-free forms interact with SH3BP5 (PubMed:26506309). Interacts (GDP-bound form) with KIF5A in a ZFYVE27-dependent manner (By similarity). Interacts (GDP-bound form) with RELCH (PubMed:29514919). Found in a complex composed of RELCH, OSBP1 and RAB11A (PubMed:29514919). Interacts with TBC1D12 (PubMed:28384198). Interacts with DEF6 (By similarity). Interacts with VPS33B (By similarity). Interacts with ATP9A (By similarity). Forms a heterotetramer with RAB11FIP3; the GTP-bound form is preferred for binding. Forms a complex with Rabin8/RAB3IP and RAB11FIP3, probably a heterohexamer with two of each protein subunit, where Rabin8/RAB3IP and RAB11FIP3 simultaneously bind to RAB11A; the complex promotes preciliary trafficking and cilia growth. Forms a complex containing RAB11A, ASAP1, Rabin8/RAB3IP, RAP11FIP3 and ARF4; the complex promotes preciliary trafficking; the complex binds to RHO in photoreceptor cells and promotes RHO ciliary transport. Interacts (GTP-bound form) with WDR44; the interaction prevents RAB11A-RAB3IP-RAB11FIP3 complex formation (By similarity).</text>
</comment>
<comment type="interaction">
    <interactant intactId="EBI-770256">
        <id>P62492</id>
    </interactant>
    <interactant intactId="EBI-2656383">
        <id>P59016</id>
        <label>Vps33b</label>
    </interactant>
    <organismsDiffer>false</organismsDiffer>
    <experiments>3</experiments>
</comment>
<comment type="interaction">
    <interactant intactId="EBI-770256">
        <id>P62492</id>
    </interactant>
    <interactant intactId="EBI-2028671">
        <id>Q62739</id>
        <label>Rab3ip</label>
    </interactant>
    <organismsDiffer>true</organismsDiffer>
    <experiments>4</experiments>
</comment>
<comment type="subcellular location">
    <subcellularLocation>
        <location evidence="2">Cell membrane</location>
        <topology evidence="15">Lipid-anchor</topology>
    </subcellularLocation>
    <subcellularLocation>
        <location evidence="2">Endosome membrane</location>
    </subcellularLocation>
    <subcellularLocation>
        <location evidence="12">Recycling endosome membrane</location>
        <topology evidence="15">Lipid-anchor</topology>
    </subcellularLocation>
    <subcellularLocation>
        <location evidence="2">Cleavage furrow</location>
    </subcellularLocation>
    <subcellularLocation>
        <location evidence="2">Cytoplasmic vesicle</location>
        <location evidence="2">Phagosome</location>
    </subcellularLocation>
    <subcellularLocation>
        <location evidence="2">Cytoplasmic vesicle membrane</location>
    </subcellularLocation>
    <subcellularLocation>
        <location evidence="2">Golgi apparatus</location>
    </subcellularLocation>
    <subcellularLocation>
        <location evidence="2">Golgi apparatus</location>
        <location evidence="2">trans-Golgi network</location>
    </subcellularLocation>
    <subcellularLocation>
        <location evidence="2">Cytoplasmic vesicle</location>
    </subcellularLocation>
    <text evidence="2">Localized to WDR44-positive endosomes and tubules. Translocates with RAB11FIP2 from the vesicles of the endocytic recycling compartment (ERC) to the plasma membrane. Localizes to the cleavage furrow. During interphase, localized in vesicles continuously moving from peripheral sorting endosomes towards the pericentrosomal ERC. Colocalizes with PARD3, PRKCI, EXOC5, OCLN, PODXL and RAB8A in apical membrane initiation sites (AMIS) during the generation of apical surface and lumenogenesis. Localized to rhodopsin transport carriers when interacting with RAB11AFIP3 and ASAP1 in photoreceptors. Colocalizes with RAB11AFIP1 on punctate vesicles (By similarity).</text>
</comment>
<comment type="domain">
    <text evidence="2">Switch 1, switch 2 and the interswitch regions are characteristic of Rab GTPases and mediate the interactions with Rab downstream effectors. The switch regions undergo conformational changes upon nucleotide binding which drives interaction with specific sets of effector proteins, with most effectors only binding to GTP-bound Rab.</text>
</comment>
<comment type="similarity">
    <text evidence="15">Belongs to the small GTPase superfamily. Rab family.</text>
</comment>
<protein>
    <recommendedName>
        <fullName evidence="14">Ras-related protein Rab-11A</fullName>
        <shortName evidence="14">Rab-11</shortName>
        <ecNumber evidence="3">3.6.5.2</ecNumber>
    </recommendedName>
</protein>